<comment type="function">
    <text evidence="1">This protein binds specifically to 23S rRNA; its binding is stimulated by other ribosomal proteins, e.g. L4, L17, and L20. It is important during the early stages of 50S assembly. It makes multiple contacts with different domains of the 23S rRNA in the assembled 50S subunit and ribosome (By similarity).</text>
</comment>
<comment type="function">
    <text evidence="1">The globular domain of the protein is located near the polypeptide exit tunnel on the outside of the subunit, while an extended beta-hairpin is found that lines the wall of the exit tunnel in the center of the 70S ribosome.</text>
</comment>
<comment type="subunit">
    <text evidence="1">Part of the 50S ribosomal subunit.</text>
</comment>
<comment type="similarity">
    <text evidence="1">Belongs to the universal ribosomal protein uL22 family.</text>
</comment>
<dbReference type="EMBL" id="CP000970">
    <property type="protein sequence ID" value="ACB19542.1"/>
    <property type="molecule type" value="Genomic_DNA"/>
</dbReference>
<dbReference type="RefSeq" id="WP_000447529.1">
    <property type="nucleotide sequence ID" value="NC_010498.1"/>
</dbReference>
<dbReference type="SMR" id="B1LHC9"/>
<dbReference type="GeneID" id="93778672"/>
<dbReference type="KEGG" id="ecm:EcSMS35_3610"/>
<dbReference type="HOGENOM" id="CLU_083987_3_3_6"/>
<dbReference type="Proteomes" id="UP000007011">
    <property type="component" value="Chromosome"/>
</dbReference>
<dbReference type="GO" id="GO:0022625">
    <property type="term" value="C:cytosolic large ribosomal subunit"/>
    <property type="evidence" value="ECO:0007669"/>
    <property type="project" value="TreeGrafter"/>
</dbReference>
<dbReference type="GO" id="GO:0019843">
    <property type="term" value="F:rRNA binding"/>
    <property type="evidence" value="ECO:0007669"/>
    <property type="project" value="UniProtKB-UniRule"/>
</dbReference>
<dbReference type="GO" id="GO:0003735">
    <property type="term" value="F:structural constituent of ribosome"/>
    <property type="evidence" value="ECO:0007669"/>
    <property type="project" value="InterPro"/>
</dbReference>
<dbReference type="GO" id="GO:0006412">
    <property type="term" value="P:translation"/>
    <property type="evidence" value="ECO:0007669"/>
    <property type="project" value="UniProtKB-UniRule"/>
</dbReference>
<dbReference type="CDD" id="cd00336">
    <property type="entry name" value="Ribosomal_L22"/>
    <property type="match status" value="1"/>
</dbReference>
<dbReference type="FunFam" id="3.90.470.10:FF:000001">
    <property type="entry name" value="50S ribosomal protein L22"/>
    <property type="match status" value="1"/>
</dbReference>
<dbReference type="Gene3D" id="3.90.470.10">
    <property type="entry name" value="Ribosomal protein L22/L17"/>
    <property type="match status" value="1"/>
</dbReference>
<dbReference type="HAMAP" id="MF_01331_B">
    <property type="entry name" value="Ribosomal_uL22_B"/>
    <property type="match status" value="1"/>
</dbReference>
<dbReference type="InterPro" id="IPR001063">
    <property type="entry name" value="Ribosomal_uL22"/>
</dbReference>
<dbReference type="InterPro" id="IPR005727">
    <property type="entry name" value="Ribosomal_uL22_bac/chlpt-type"/>
</dbReference>
<dbReference type="InterPro" id="IPR047867">
    <property type="entry name" value="Ribosomal_uL22_bac/org-type"/>
</dbReference>
<dbReference type="InterPro" id="IPR018260">
    <property type="entry name" value="Ribosomal_uL22_CS"/>
</dbReference>
<dbReference type="InterPro" id="IPR036394">
    <property type="entry name" value="Ribosomal_uL22_sf"/>
</dbReference>
<dbReference type="NCBIfam" id="TIGR01044">
    <property type="entry name" value="rplV_bact"/>
    <property type="match status" value="1"/>
</dbReference>
<dbReference type="PANTHER" id="PTHR13501">
    <property type="entry name" value="CHLOROPLAST 50S RIBOSOMAL PROTEIN L22-RELATED"/>
    <property type="match status" value="1"/>
</dbReference>
<dbReference type="PANTHER" id="PTHR13501:SF8">
    <property type="entry name" value="LARGE RIBOSOMAL SUBUNIT PROTEIN UL22M"/>
    <property type="match status" value="1"/>
</dbReference>
<dbReference type="Pfam" id="PF00237">
    <property type="entry name" value="Ribosomal_L22"/>
    <property type="match status" value="1"/>
</dbReference>
<dbReference type="SUPFAM" id="SSF54843">
    <property type="entry name" value="Ribosomal protein L22"/>
    <property type="match status" value="1"/>
</dbReference>
<dbReference type="PROSITE" id="PS00464">
    <property type="entry name" value="RIBOSOMAL_L22"/>
    <property type="match status" value="1"/>
</dbReference>
<accession>B1LHC9</accession>
<proteinExistence type="inferred from homology"/>
<gene>
    <name evidence="1" type="primary">rplV</name>
    <name type="ordered locus">EcSMS35_3610</name>
</gene>
<protein>
    <recommendedName>
        <fullName evidence="1">Large ribosomal subunit protein uL22</fullName>
    </recommendedName>
    <alternativeName>
        <fullName evidence="2">50S ribosomal protein L22</fullName>
    </alternativeName>
</protein>
<evidence type="ECO:0000255" key="1">
    <source>
        <dbReference type="HAMAP-Rule" id="MF_01331"/>
    </source>
</evidence>
<evidence type="ECO:0000305" key="2"/>
<keyword id="KW-0687">Ribonucleoprotein</keyword>
<keyword id="KW-0689">Ribosomal protein</keyword>
<keyword id="KW-0694">RNA-binding</keyword>
<keyword id="KW-0699">rRNA-binding</keyword>
<feature type="chain" id="PRO_1000142261" description="Large ribosomal subunit protein uL22">
    <location>
        <begin position="1"/>
        <end position="110"/>
    </location>
</feature>
<reference key="1">
    <citation type="journal article" date="2008" name="J. Bacteriol.">
        <title>Insights into the environmental resistance gene pool from the genome sequence of the multidrug-resistant environmental isolate Escherichia coli SMS-3-5.</title>
        <authorList>
            <person name="Fricke W.F."/>
            <person name="Wright M.S."/>
            <person name="Lindell A.H."/>
            <person name="Harkins D.M."/>
            <person name="Baker-Austin C."/>
            <person name="Ravel J."/>
            <person name="Stepanauskas R."/>
        </authorList>
    </citation>
    <scope>NUCLEOTIDE SEQUENCE [LARGE SCALE GENOMIC DNA]</scope>
    <source>
        <strain>SMS-3-5 / SECEC</strain>
    </source>
</reference>
<organism>
    <name type="scientific">Escherichia coli (strain SMS-3-5 / SECEC)</name>
    <dbReference type="NCBI Taxonomy" id="439855"/>
    <lineage>
        <taxon>Bacteria</taxon>
        <taxon>Pseudomonadati</taxon>
        <taxon>Pseudomonadota</taxon>
        <taxon>Gammaproteobacteria</taxon>
        <taxon>Enterobacterales</taxon>
        <taxon>Enterobacteriaceae</taxon>
        <taxon>Escherichia</taxon>
    </lineage>
</organism>
<sequence length="110" mass="12226">METIAKHRHARSSAQKVRLVADLIRGKKVSQALDILTYTNKKAAVLVKKVLESAIANAEHNDGADIDDLKVTKIFVDEGPSMKRIMPRAKGRADRILKRTSHITVVVSDR</sequence>
<name>RL22_ECOSM</name>